<gene>
    <name evidence="3" type="primary">pigC</name>
</gene>
<name>PIGC_SERMA</name>
<protein>
    <recommendedName>
        <fullName evidence="4">Prodigiosin synthesizing transferase PigC</fullName>
        <ecNumber evidence="6">6.4.-.-</ecNumber>
    </recommendedName>
    <alternativeName>
        <fullName evidence="4">Prodigiosin synthetase PigC</fullName>
    </alternativeName>
</protein>
<dbReference type="EC" id="6.4.-.-" evidence="6"/>
<dbReference type="EMBL" id="AJ833002">
    <property type="protein sequence ID" value="CAH55648.1"/>
    <property type="molecule type" value="Genomic_DNA"/>
</dbReference>
<dbReference type="RefSeq" id="WP_161544455.1">
    <property type="nucleotide sequence ID" value="NZ_AP021873.1"/>
</dbReference>
<dbReference type="SMR" id="Q5W252"/>
<dbReference type="BioCyc" id="MetaCyc:MONOMER-18836"/>
<dbReference type="UniPathway" id="UPA01072"/>
<dbReference type="GO" id="GO:0005524">
    <property type="term" value="F:ATP binding"/>
    <property type="evidence" value="ECO:0007669"/>
    <property type="project" value="UniProtKB-KW"/>
</dbReference>
<dbReference type="GO" id="GO:0016301">
    <property type="term" value="F:kinase activity"/>
    <property type="evidence" value="ECO:0007669"/>
    <property type="project" value="InterPro"/>
</dbReference>
<dbReference type="GO" id="GO:0016874">
    <property type="term" value="F:ligase activity"/>
    <property type="evidence" value="ECO:0007669"/>
    <property type="project" value="UniProtKB-KW"/>
</dbReference>
<dbReference type="GO" id="GO:0016740">
    <property type="term" value="F:transferase activity"/>
    <property type="evidence" value="ECO:0000314"/>
    <property type="project" value="UniProtKB"/>
</dbReference>
<dbReference type="GO" id="GO:0017000">
    <property type="term" value="P:antibiotic biosynthetic process"/>
    <property type="evidence" value="ECO:0000314"/>
    <property type="project" value="UniProtKB"/>
</dbReference>
<dbReference type="FunFam" id="3.50.30.10:FF:000007">
    <property type="entry name" value="Phosphoenolpyruvate synthase"/>
    <property type="match status" value="1"/>
</dbReference>
<dbReference type="Gene3D" id="3.30.1490.20">
    <property type="entry name" value="ATP-grasp fold, A domain"/>
    <property type="match status" value="1"/>
</dbReference>
<dbReference type="Gene3D" id="3.30.470.20">
    <property type="entry name" value="ATP-grasp fold, B domain"/>
    <property type="match status" value="1"/>
</dbReference>
<dbReference type="Gene3D" id="3.50.30.10">
    <property type="entry name" value="Phosphohistidine domain"/>
    <property type="match status" value="1"/>
</dbReference>
<dbReference type="InterPro" id="IPR013815">
    <property type="entry name" value="ATP_grasp_subdomain_1"/>
</dbReference>
<dbReference type="InterPro" id="IPR008279">
    <property type="entry name" value="PEP-util_enz_mobile_dom"/>
</dbReference>
<dbReference type="InterPro" id="IPR051549">
    <property type="entry name" value="PEP_Utilizing_Enz"/>
</dbReference>
<dbReference type="InterPro" id="IPR036637">
    <property type="entry name" value="Phosphohistidine_dom_sf"/>
</dbReference>
<dbReference type="InterPro" id="IPR002192">
    <property type="entry name" value="PPDK_AMP/ATP-bd"/>
</dbReference>
<dbReference type="PANTHER" id="PTHR43615">
    <property type="entry name" value="PHOSPHOENOLPYRUVATE SYNTHASE-RELATED"/>
    <property type="match status" value="1"/>
</dbReference>
<dbReference type="PANTHER" id="PTHR43615:SF1">
    <property type="entry name" value="PPDK_N DOMAIN-CONTAINING PROTEIN"/>
    <property type="match status" value="1"/>
</dbReference>
<dbReference type="Pfam" id="PF00391">
    <property type="entry name" value="PEP-utilizers"/>
    <property type="match status" value="1"/>
</dbReference>
<dbReference type="Pfam" id="PF01326">
    <property type="entry name" value="PPDK_N"/>
    <property type="match status" value="1"/>
</dbReference>
<dbReference type="SUPFAM" id="SSF56059">
    <property type="entry name" value="Glutathione synthetase ATP-binding domain-like"/>
    <property type="match status" value="1"/>
</dbReference>
<dbReference type="SUPFAM" id="SSF52009">
    <property type="entry name" value="Phosphohistidine domain"/>
    <property type="match status" value="1"/>
</dbReference>
<proteinExistence type="evidence at protein level"/>
<evidence type="ECO:0000250" key="1">
    <source>
        <dbReference type="UniProtKB" id="Q5W269"/>
    </source>
</evidence>
<evidence type="ECO:0000269" key="2">
    <source>
    </source>
</evidence>
<evidence type="ECO:0000303" key="3">
    <source>
    </source>
</evidence>
<evidence type="ECO:0000303" key="4">
    <source>
    </source>
</evidence>
<evidence type="ECO:0000305" key="5"/>
<evidence type="ECO:0000305" key="6">
    <source>
    </source>
</evidence>
<comment type="function">
    <text evidence="2">Involved in the biosynthesis of 2-methyl-3-n-amyl-pyrrole (MAP), one of the terminal products involved in the biosynthesis of the red antibiotic prodigiosin (Pig). Catalyzes the transfer of 2-methyl-3-n-amyl-pyrrole (MAP) to 4-methoxy-2,2'-bipyrrole-5-carbaldehyde (MBC) to yield prodigiosin. It is able to use substrates with a variety of monocyclic rings in place of the pyrrolic ring A of its natural substrate.</text>
</comment>
<comment type="pathway">
    <text evidence="1 5">Antibiotic biosynthesis; prodigiosin biosynthesis.</text>
</comment>
<comment type="similarity">
    <text evidence="5">Belongs to the PigC family.</text>
</comment>
<keyword id="KW-0045">Antibiotic biosynthesis</keyword>
<keyword id="KW-0067">ATP-binding</keyword>
<keyword id="KW-0436">Ligase</keyword>
<keyword id="KW-0547">Nucleotide-binding</keyword>
<feature type="chain" id="PRO_0000436237" description="Prodigiosin synthesizing transferase PigC">
    <location>
        <begin position="1"/>
        <end position="888"/>
    </location>
</feature>
<sequence length="888" mass="99191">MNPTLVVELSGDKTLEPHRLGGKAHSLNHLIHAGLPVPPAFCITAQAYRQFIEFAVPGALLDTGAPGNVRDMILSAAIPAPLDLAIRHACKQLGDGASLAVRSSALEEDGLTHSFAGQYDTYLHVRGDDEVVRKVQSCWASLWAERAAQYSRTSAAQSDIAVVLQIMVDADAAGVMFTQDPLTGDANHIVIDSCWGLGEGVVSGQVTTDSFILDKASGEIRERQIRHKPHYCQRDPQGRVTLLQTPEARRDAPSLTPEQLQQLARLARQTRMIYGAELDIEWAVKDDRVWLLQARPITTQAKPVQMLYANPWESDPTIKERAFFSRMDTGEIVTGLMTPLGLSFCQFYQKHIHGPAIKTMGLADIGDWQIYMGYLQGYVYLNISGSAYMLRQCPPTRDEMKFTTRYATADIDFSGYKNPYGPGVQGWAYLKSAWHWLKQQRHNLRSAGATVDAMIALRQRETRRFLALDLTTMTHQELERELSRIDGYFLDSCAAYMPFFLQSFALYDALALTCERYLKGRGNGLQNRIKASMNNLRTIEVTLGILSLVETVNRQPALKALFERHSAQELVTVLPTDPESRAFWQSDFSAFLFEFGARGRQEFELSLPRWNDDPSYLLQVMKMYLQHPVDLHTKLRETERLRHEDSAALLKAMPWFGRMKLKFITKLYGVMAERREATRPTFVTETWFYRRIMLEVLRRLEAQGLVKSADLPYVDFERFRAFMAGEQSAQEAFAADLIERNRHQHLLNLHAEEPPMAIVGGYQPRMKAPTAENAAGMLSGLAASPGKVVAKARVITDLLAQAGELQPNEILVARFTDASWTPLFALAAGIVTDIGSALSHSCIVAREFGIPAAVNLKNATQLINSGDTLILDGDSGTVIIQRGERADG</sequence>
<organism>
    <name type="scientific">Serratia marcescens</name>
    <dbReference type="NCBI Taxonomy" id="615"/>
    <lineage>
        <taxon>Bacteria</taxon>
        <taxon>Pseudomonadati</taxon>
        <taxon>Pseudomonadota</taxon>
        <taxon>Gammaproteobacteria</taxon>
        <taxon>Enterobacterales</taxon>
        <taxon>Yersiniaceae</taxon>
        <taxon>Serratia</taxon>
    </lineage>
</organism>
<accession>Q5W252</accession>
<reference key="1">
    <citation type="journal article" date="2004" name="Microbiology">
        <title>The Serratia gene cluster encoding biosynthesis of the red antibiotic, prodigiosin, shows species- and strain-dependent genome context variation.</title>
        <authorList>
            <person name="Harris A.K."/>
            <person name="Williamson N.R."/>
            <person name="Slater H."/>
            <person name="Cox A."/>
            <person name="Abbasi S."/>
            <person name="Foulds I."/>
            <person name="Simonsen H.T."/>
            <person name="Leeper F.J."/>
            <person name="Salmond G.P."/>
        </authorList>
    </citation>
    <scope>NUCLEOTIDE SEQUENCE [GENOMIC DNA]</scope>
    <source>
        <strain>ATCC 274 / NCDO 740 / NCIB 1377 / NCTC 1377</strain>
    </source>
</reference>
<reference key="2">
    <citation type="journal article" date="2008" name="Chem. Commun. (Camb.)">
        <title>Chemoenzymatic synthesis of prodigiosin analogues--exploring the substrate specificity of PigC.</title>
        <authorList>
            <person name="Chawrai S.R."/>
            <person name="Williamson N.R."/>
            <person name="Salmond G.P."/>
            <person name="Leeper F.J."/>
        </authorList>
    </citation>
    <scope>FUNCTION</scope>
    <scope>CATALYTIC ACTIVITY</scope>
    <scope>SUBSTRATE SPECIFICITY</scope>
    <source>
        <strain>ATCC 274 / NCDO 740 / NCIB 1377 / NCTC 1377</strain>
    </source>
</reference>